<sequence>MGTHDMSPNASHSYIYRVLSDILEFPDNEQRMWWHSVAPMFAEMLRACGYDIHEQYKILGIWKKAVIPFLGCYPTNDGPRWLSILTRYGTPFELSLNCSHRLVRYTFEPINAATGTDKDPFNTQAIWESLSQLRRLNGDVDTELFNHFKANLTVDNAESAHLVESNLAGSKIRTQNKLALDLQNGSFVVKAYFYPTLKSAATGRSITDLMLSSVRQQVQKWSPTLAQPLSVLEEYIEARGPDSTASPRLLSCDLINPERARTKIYLLERQVSIEAMEDLWTLGGRRKSDSALAALDIIREIWSLIQLPPCLASYPSGYLPLGTVPDEQLPLMVNYTLRPDDPMPEPQVYFTTFGQNDLHVTNALTAFFERQGWTELAESYKENLRAYYPHADQETANYIHAYVSFSYRKGVSYMSVYLQTLETGDWPITYSPKRQYLCNEHPIHLKELAKACA</sequence>
<keyword id="KW-1185">Reference proteome</keyword>
<keyword id="KW-0808">Transferase</keyword>
<dbReference type="EC" id="2.5.1.34" evidence="2"/>
<dbReference type="EMBL" id="JQFZ01000090">
    <property type="protein sequence ID" value="KGO59699.1"/>
    <property type="molecule type" value="Genomic_DNA"/>
</dbReference>
<dbReference type="RefSeq" id="XP_016600812.1">
    <property type="nucleotide sequence ID" value="XM_016742814.1"/>
</dbReference>
<dbReference type="SMR" id="A0A0A2JWD0"/>
<dbReference type="STRING" id="27334.A0A0A2JWD0"/>
<dbReference type="GeneID" id="27678233"/>
<dbReference type="VEuPathDB" id="FungiDB:PEXP_030510"/>
<dbReference type="HOGENOM" id="CLU_037431_0_0_1"/>
<dbReference type="OrthoDB" id="5392033at2759"/>
<dbReference type="PhylomeDB" id="A0A0A2JWD0"/>
<dbReference type="Proteomes" id="UP000030143">
    <property type="component" value="Unassembled WGS sequence"/>
</dbReference>
<dbReference type="GO" id="GO:0050364">
    <property type="term" value="F:tryptophan dimethylallyltransferase activity"/>
    <property type="evidence" value="ECO:0007669"/>
    <property type="project" value="UniProtKB-EC"/>
</dbReference>
<dbReference type="GO" id="GO:0009820">
    <property type="term" value="P:alkaloid metabolic process"/>
    <property type="evidence" value="ECO:0007669"/>
    <property type="project" value="InterPro"/>
</dbReference>
<dbReference type="CDD" id="cd13929">
    <property type="entry name" value="PT-DMATS_CymD"/>
    <property type="match status" value="1"/>
</dbReference>
<dbReference type="InterPro" id="IPR033964">
    <property type="entry name" value="Aro_prenylTrfase"/>
</dbReference>
<dbReference type="InterPro" id="IPR017795">
    <property type="entry name" value="Aro_prenylTrfase_DMATS"/>
</dbReference>
<dbReference type="InterPro" id="IPR012148">
    <property type="entry name" value="DMATS-type_fun"/>
</dbReference>
<dbReference type="NCBIfam" id="TIGR03429">
    <property type="entry name" value="arom_pren_DMATS"/>
    <property type="match status" value="1"/>
</dbReference>
<dbReference type="PANTHER" id="PTHR40627">
    <property type="entry name" value="INDOLE PRENYLTRANSFERASE TDIB-RELATED"/>
    <property type="match status" value="1"/>
</dbReference>
<dbReference type="PANTHER" id="PTHR40627:SF3">
    <property type="entry name" value="PRENYLTRANSFERASE ASQH2-RELATED"/>
    <property type="match status" value="1"/>
</dbReference>
<dbReference type="Pfam" id="PF11991">
    <property type="entry name" value="Trp_DMAT"/>
    <property type="match status" value="1"/>
</dbReference>
<dbReference type="PIRSF" id="PIRSF000509">
    <property type="entry name" value="Trp_DMAT"/>
    <property type="match status" value="1"/>
</dbReference>
<dbReference type="SFLD" id="SFLDS00036">
    <property type="entry name" value="Aromatic_Prenyltransferase"/>
    <property type="match status" value="1"/>
</dbReference>
<dbReference type="SFLD" id="SFLDG01162">
    <property type="entry name" value="I"/>
    <property type="match status" value="1"/>
</dbReference>
<gene>
    <name evidence="4" type="primary">cnsF</name>
    <name type="ORF">PEX2_055400</name>
</gene>
<feature type="chain" id="PRO_0000446461" description="Tryptophan dimethylallyltransferase cnsF">
    <location>
        <begin position="1"/>
        <end position="453"/>
    </location>
</feature>
<feature type="binding site" evidence="1">
    <location>
        <begin position="84"/>
        <end position="85"/>
    </location>
    <ligand>
        <name>L-tryptophan</name>
        <dbReference type="ChEBI" id="CHEBI:57912"/>
    </ligand>
</feature>
<feature type="binding site" evidence="1">
    <location>
        <position position="93"/>
    </location>
    <ligand>
        <name>L-tryptophan</name>
        <dbReference type="ChEBI" id="CHEBI:57912"/>
    </ligand>
</feature>
<feature type="binding site" evidence="1">
    <location>
        <position position="104"/>
    </location>
    <ligand>
        <name>substrate</name>
    </ligand>
</feature>
<feature type="binding site" evidence="1">
    <location>
        <position position="190"/>
    </location>
    <ligand>
        <name>substrate</name>
    </ligand>
</feature>
<feature type="binding site" evidence="1">
    <location>
        <position position="192"/>
    </location>
    <ligand>
        <name>substrate</name>
    </ligand>
</feature>
<feature type="binding site" evidence="1">
    <location>
        <position position="194"/>
    </location>
    <ligand>
        <name>L-tryptophan</name>
        <dbReference type="ChEBI" id="CHEBI:57912"/>
    </ligand>
</feature>
<feature type="binding site" evidence="1">
    <location>
        <position position="248"/>
    </location>
    <ligand>
        <name>L-tryptophan</name>
        <dbReference type="ChEBI" id="CHEBI:57912"/>
    </ligand>
</feature>
<feature type="binding site" evidence="1">
    <location>
        <position position="261"/>
    </location>
    <ligand>
        <name>substrate</name>
    </ligand>
</feature>
<feature type="binding site" evidence="1">
    <location>
        <position position="263"/>
    </location>
    <ligand>
        <name>substrate</name>
    </ligand>
</feature>
<feature type="binding site" evidence="1">
    <location>
        <position position="265"/>
    </location>
    <ligand>
        <name>substrate</name>
    </ligand>
</feature>
<feature type="binding site" evidence="1">
    <location>
        <position position="347"/>
    </location>
    <ligand>
        <name>substrate</name>
    </ligand>
</feature>
<feature type="binding site" evidence="1">
    <location>
        <position position="349"/>
    </location>
    <ligand>
        <name>substrate</name>
    </ligand>
</feature>
<proteinExistence type="evidence at protein level"/>
<accession>A0A0A2JWD0</accession>
<comment type="function">
    <text evidence="2 3">Tryptophan dimethylallyltransferase; part of the gene cluster that mediates the biosynthesis of communesins, a prominent class of indole alkaloids with great potential as pharmaceuticals (PubMed:25571861). Communesins are biosynthesized by the coupling of tryptamine and aurantioclavine, two building blocks derived from L-tryptophan (PubMed:25571861). The L-tryptophan decarboxylase cnsB converts L-tryptophan to tryptamine, whereas the tryptophan dimethylallyltransferase cnsF converts L-tryptophan to 4-dimethylallyl tryptophan which is further transformed to aurantioclavine by the aurantioclavine synthase cnsA, probably aided by the catalase cnsD (PubMed:25571861). The cytochrome P450 monooxygenase cnsC catalyzes the heterodimeric coupling between the two different indole moieties, tryptamine and aurantioclavine, to construct vicinal quaternary stereocenters and yield the heptacyclic communesin scaffold (PubMed:26963294). The O-methyltransferase cnsE then methylates the communesin scaffold to produce communesin K, the simplest characterized communesin that contains the heptacyclic core (PubMed:25571861). The dioxygenase cnsJ converts communesin K into communesin I (PubMed:25571861). Acylation to introduce the hexadienyl group at position N16 of communesin I by the acyltransferase cnsK leads to the production of communesin B. The hexadienyl group is produced by the highly reducing polyketide synthase cnsI, before being hydrolytically removed from cnsI by the serine hydrolase cnsH, converted into hexadienyl-CoA by the CoA ligase cnsG, and then transferred to communesin I by cnsK (PubMed:25571861). Surprisingly, cnsK may also be a promiscuous acyltransferase that can tolerate a range of acyl groups, including acetyl-, propionyl-, and butyryl-CoA, which lead to communesins A, G and H respectively (PubMed:25571861). The roles of the alpha-ketoglutarate-dependent dioxygenases cnsM and cnsP have still to be determined (PubMed:25571861).</text>
</comment>
<comment type="catalytic activity">
    <reaction evidence="2">
        <text>L-tryptophan + dimethylallyl diphosphate = 4-(3-methylbut-2-enyl)-L-tryptophan + diphosphate</text>
        <dbReference type="Rhea" id="RHEA:14173"/>
        <dbReference type="ChEBI" id="CHEBI:33019"/>
        <dbReference type="ChEBI" id="CHEBI:57623"/>
        <dbReference type="ChEBI" id="CHEBI:57912"/>
        <dbReference type="ChEBI" id="CHEBI:58209"/>
        <dbReference type="EC" id="2.5.1.34"/>
    </reaction>
</comment>
<comment type="pathway">
    <text evidence="2">Alkaloid biosynthesis.</text>
</comment>
<comment type="subunit">
    <text evidence="1">Homodimer.</text>
</comment>
<comment type="disruption phenotype">
    <text evidence="2">Abolishes the biosynthesis of communesins A and B.</text>
</comment>
<comment type="similarity">
    <text evidence="5">Belongs to the tryptophan dimethylallyltransferase family.</text>
</comment>
<reference key="1">
    <citation type="journal article" date="2015" name="Mol. Plant Microbe Interact.">
        <title>Genome, transcriptome, and functional analyses of Penicillium expansum provide new insights into secondary metabolism and pathogenicity.</title>
        <authorList>
            <person name="Ballester A.R."/>
            <person name="Marcet-Houben M."/>
            <person name="Levin E."/>
            <person name="Sela N."/>
            <person name="Selma-Lazaro C."/>
            <person name="Carmona L."/>
            <person name="Wisniewski M."/>
            <person name="Droby S."/>
            <person name="Gonzalez-Candelas L."/>
            <person name="Gabaldon T."/>
        </authorList>
    </citation>
    <scope>NUCLEOTIDE SEQUENCE [LARGE SCALE GENOMIC DNA]</scope>
    <source>
        <strain>MD-8</strain>
    </source>
</reference>
<reference key="2">
    <citation type="journal article" date="2015" name="Angew. Chem. Int. Ed.">
        <title>Elucidation of the concise biosynthetic pathway of the communesin indole alkaloids.</title>
        <authorList>
            <person name="Lin H.C."/>
            <person name="Chiou G."/>
            <person name="Chooi Y.H."/>
            <person name="McMahon T.C."/>
            <person name="Xu W."/>
            <person name="Garg N.K."/>
            <person name="Tang Y."/>
        </authorList>
    </citation>
    <scope>IDENTIFICATION</scope>
    <scope>FUNCTION</scope>
    <scope>DISRUPTION PHENOTYPE</scope>
    <scope>CATALYTIC ACTIVITY</scope>
    <scope>PATHWAY</scope>
</reference>
<reference key="3">
    <citation type="journal article" date="2016" name="J. Am. Chem. Soc.">
        <title>P450-mediated coupling of indole fragments to forge communesin and unnatural isomers.</title>
        <authorList>
            <person name="Lin H.C."/>
            <person name="McMahon T.C."/>
            <person name="Patel A."/>
            <person name="Corsello M."/>
            <person name="Simon A."/>
            <person name="Xu W."/>
            <person name="Zhao M."/>
            <person name="Houk K.N."/>
            <person name="Garg N.K."/>
            <person name="Tang Y."/>
        </authorList>
    </citation>
    <scope>FUNCTION</scope>
</reference>
<protein>
    <recommendedName>
        <fullName evidence="4">Tryptophan dimethylallyltransferase cnsF</fullName>
        <ecNumber evidence="2">2.5.1.34</ecNumber>
    </recommendedName>
    <alternativeName>
        <fullName evidence="4">4-dimethylallyltryptophan synthase</fullName>
        <shortName evidence="4">DMATS</shortName>
    </alternativeName>
    <alternativeName>
        <fullName evidence="5">All-trans-hexaprenyl-diphosphate synthase</fullName>
    </alternativeName>
    <alternativeName>
        <fullName evidence="4">Communesin biosynthesis cluster protein F</fullName>
    </alternativeName>
    <alternativeName>
        <fullName evidence="5">L-tryptophan dimethylallyl transferase</fullName>
    </alternativeName>
</protein>
<evidence type="ECO:0000250" key="1">
    <source>
        <dbReference type="UniProtKB" id="Q50EL0"/>
    </source>
</evidence>
<evidence type="ECO:0000269" key="2">
    <source>
    </source>
</evidence>
<evidence type="ECO:0000269" key="3">
    <source>
    </source>
</evidence>
<evidence type="ECO:0000303" key="4">
    <source>
    </source>
</evidence>
<evidence type="ECO:0000305" key="5"/>
<name>CNSF_PENEN</name>
<organism>
    <name type="scientific">Penicillium expansum</name>
    <name type="common">Blue mold rot fungus</name>
    <dbReference type="NCBI Taxonomy" id="27334"/>
    <lineage>
        <taxon>Eukaryota</taxon>
        <taxon>Fungi</taxon>
        <taxon>Dikarya</taxon>
        <taxon>Ascomycota</taxon>
        <taxon>Pezizomycotina</taxon>
        <taxon>Eurotiomycetes</taxon>
        <taxon>Eurotiomycetidae</taxon>
        <taxon>Eurotiales</taxon>
        <taxon>Aspergillaceae</taxon>
        <taxon>Penicillium</taxon>
    </lineage>
</organism>